<proteinExistence type="inferred from homology"/>
<sequence length="194" mass="22635">MMMMKWIISILTMSIMPVLAYSSSIFRFHSEDVELCYGHLYFDRIYNVVNIKYNPHIPYRYNFINRTLTVDELDDNVFFTHGYFLKHKYGSLNPSLIVSLSGNLKYNDIQCSVNVSCLIKNLATSTSTILTSKHKTYSLHRSTCITIIGYDSIIWYKDINDKYNDIYDFTAICMLIASTLIVTIYVFKKIKMNS</sequence>
<gene>
    <name type="primary">OPG172</name>
    <name type="ORF">A43R</name>
</gene>
<organismHost>
    <name type="scientific">Homo sapiens</name>
    <name type="common">Human</name>
    <dbReference type="NCBI Taxonomy" id="9606"/>
</organismHost>
<feature type="signal peptide" evidence="2">
    <location>
        <begin position="1"/>
        <end position="22"/>
    </location>
</feature>
<feature type="chain" id="PRO_0000099331" description="Protein A43">
    <location>
        <begin position="23"/>
        <end position="194"/>
    </location>
</feature>
<feature type="topological domain" description="Extracellular">
    <location>
        <begin position="23"/>
        <end position="165"/>
    </location>
</feature>
<feature type="transmembrane region" description="Helical" evidence="2">
    <location>
        <begin position="166"/>
        <end position="186"/>
    </location>
</feature>
<feature type="topological domain" description="Cytoplasmic">
    <location>
        <begin position="187"/>
        <end position="194"/>
    </location>
</feature>
<feature type="glycosylation site" description="N-linked (GlcNAc...) asparagine; by host" evidence="2">
    <location>
        <position position="65"/>
    </location>
</feature>
<feature type="glycosylation site" description="N-linked (GlcNAc...) asparagine; by host" evidence="2">
    <location>
        <position position="114"/>
    </location>
</feature>
<evidence type="ECO:0000250" key="1">
    <source>
        <dbReference type="UniProtKB" id="P26671"/>
    </source>
</evidence>
<evidence type="ECO:0000255" key="2"/>
<evidence type="ECO:0000305" key="3"/>
<accession>P21065</accession>
<keyword id="KW-0325">Glycoprotein</keyword>
<keyword id="KW-1043">Host membrane</keyword>
<keyword id="KW-0426">Late protein</keyword>
<keyword id="KW-0472">Membrane</keyword>
<keyword id="KW-1185">Reference proteome</keyword>
<keyword id="KW-0732">Signal</keyword>
<keyword id="KW-0812">Transmembrane</keyword>
<keyword id="KW-1133">Transmembrane helix</keyword>
<name>PG172_VACCC</name>
<dbReference type="EMBL" id="M35027">
    <property type="protein sequence ID" value="AAA48174.1"/>
    <property type="molecule type" value="Genomic_DNA"/>
</dbReference>
<dbReference type="PIR" id="I42521">
    <property type="entry name" value="I42521"/>
</dbReference>
<dbReference type="Proteomes" id="UP000008269">
    <property type="component" value="Segment"/>
</dbReference>
<dbReference type="GO" id="GO:0033644">
    <property type="term" value="C:host cell membrane"/>
    <property type="evidence" value="ECO:0007669"/>
    <property type="project" value="UniProtKB-SubCell"/>
</dbReference>
<dbReference type="GO" id="GO:0044228">
    <property type="term" value="C:host cell surface"/>
    <property type="evidence" value="ECO:0007669"/>
    <property type="project" value="UniProtKB-SubCell"/>
</dbReference>
<dbReference type="GO" id="GO:0016020">
    <property type="term" value="C:membrane"/>
    <property type="evidence" value="ECO:0007669"/>
    <property type="project" value="UniProtKB-KW"/>
</dbReference>
<dbReference type="InterPro" id="IPR009487">
    <property type="entry name" value="Orthopox_A43R"/>
</dbReference>
<dbReference type="Pfam" id="PF06517">
    <property type="entry name" value="Orthopox_A43R"/>
    <property type="match status" value="1"/>
</dbReference>
<comment type="subcellular location">
    <subcellularLocation>
        <location evidence="1">Host membrane</location>
        <topology evidence="1">Single-pass type I membrane protein</topology>
    </subcellularLocation>
    <subcellularLocation>
        <location evidence="1">Host cell surface</location>
    </subcellularLocation>
</comment>
<comment type="similarity">
    <text evidence="3">Belongs to the orthopoxvirus OPG172 protein family.</text>
</comment>
<organism>
    <name type="scientific">Vaccinia virus (strain Copenhagen)</name>
    <name type="common">VACV</name>
    <dbReference type="NCBI Taxonomy" id="10249"/>
    <lineage>
        <taxon>Viruses</taxon>
        <taxon>Varidnaviria</taxon>
        <taxon>Bamfordvirae</taxon>
        <taxon>Nucleocytoviricota</taxon>
        <taxon>Pokkesviricetes</taxon>
        <taxon>Chitovirales</taxon>
        <taxon>Poxviridae</taxon>
        <taxon>Chordopoxvirinae</taxon>
        <taxon>Orthopoxvirus</taxon>
        <taxon>Vaccinia virus</taxon>
    </lineage>
</organism>
<protein>
    <recommendedName>
        <fullName>Protein A43</fullName>
    </recommendedName>
</protein>
<reference key="1">
    <citation type="journal article" date="1990" name="Virology">
        <title>The complete DNA sequence of vaccinia virus.</title>
        <authorList>
            <person name="Goebel S.J."/>
            <person name="Johnson G.P."/>
            <person name="Perkus M.E."/>
            <person name="Davis S.W."/>
            <person name="Winslow J.P."/>
            <person name="Paoletti E."/>
        </authorList>
    </citation>
    <scope>NUCLEOTIDE SEQUENCE [LARGE SCALE GENOMIC DNA]</scope>
</reference>
<reference key="2">
    <citation type="journal article" date="1990" name="Virology">
        <title>Appendix to 'The complete DNA sequence of vaccinia virus'.</title>
        <authorList>
            <person name="Goebel S.J."/>
            <person name="Johnson G.P."/>
            <person name="Perkus M.E."/>
            <person name="Davis S.W."/>
            <person name="Winslow J.P."/>
            <person name="Paoletti E."/>
        </authorList>
    </citation>
    <scope>NUCLEOTIDE SEQUENCE [LARGE SCALE GENOMIC DNA]</scope>
</reference>